<organism>
    <name type="scientific">Caenorhabditis elegans</name>
    <dbReference type="NCBI Taxonomy" id="6239"/>
    <lineage>
        <taxon>Eukaryota</taxon>
        <taxon>Metazoa</taxon>
        <taxon>Ecdysozoa</taxon>
        <taxon>Nematoda</taxon>
        <taxon>Chromadorea</taxon>
        <taxon>Rhabditida</taxon>
        <taxon>Rhabditina</taxon>
        <taxon>Rhabditomorpha</taxon>
        <taxon>Rhabditoidea</taxon>
        <taxon>Rhabditidae</taxon>
        <taxon>Peloderinae</taxon>
        <taxon>Caenorhabditis</taxon>
    </lineage>
</organism>
<reference key="1">
    <citation type="journal article" date="1996" name="Development">
        <title>The C. elegans vulval induction gene lin-2 encodes a member of the MAGUK family of cell junction proteins.</title>
        <authorList>
            <person name="Hoskins R."/>
            <person name="Hajnal A.F."/>
            <person name="Harp S.A."/>
            <person name="Kim S.K."/>
        </authorList>
    </citation>
    <scope>NUCLEOTIDE SEQUENCE [MRNA] (ISOFORMS LIN-2A AND LIN-2B)</scope>
    <source>
        <strain>Bristol N2</strain>
    </source>
</reference>
<reference key="2">
    <citation type="journal article" date="1998" name="Science">
        <title>Genome sequence of the nematode C. elegans: a platform for investigating biology.</title>
        <authorList>
            <consortium name="The C. elegans sequencing consortium"/>
        </authorList>
    </citation>
    <scope>NUCLEOTIDE SEQUENCE [LARGE SCALE GENOMIC DNA]</scope>
    <source>
        <strain>Bristol N2</strain>
    </source>
</reference>
<name>LIN2_CAEEL</name>
<gene>
    <name type="primary">lin-2</name>
    <name type="ORF">F17E5.1</name>
</gene>
<evidence type="ECO:0000255" key="1">
    <source>
        <dbReference type="PROSITE-ProRule" id="PRU00100"/>
    </source>
</evidence>
<evidence type="ECO:0000255" key="2">
    <source>
        <dbReference type="PROSITE-ProRule" id="PRU00143"/>
    </source>
</evidence>
<evidence type="ECO:0000255" key="3">
    <source>
        <dbReference type="PROSITE-ProRule" id="PRU00159"/>
    </source>
</evidence>
<evidence type="ECO:0000255" key="4">
    <source>
        <dbReference type="PROSITE-ProRule" id="PRU00192"/>
    </source>
</evidence>
<evidence type="ECO:0000255" key="5">
    <source>
        <dbReference type="PROSITE-ProRule" id="PRU00365"/>
    </source>
</evidence>
<evidence type="ECO:0000256" key="6">
    <source>
        <dbReference type="SAM" id="MobiDB-lite"/>
    </source>
</evidence>
<evidence type="ECO:0000303" key="7">
    <source>
    </source>
</evidence>
<evidence type="ECO:0000305" key="8"/>
<sequence>MRELDPDESNLLLDEQLSIRDVIEQGPFSNVYRILHGPSNRKFLLRSINLNLFRQHTGLGFEEIDEEIRICQNLQHPYICRLEKTINSVHYRHIIFENMEGNDICFEIVQRASNGFVFSEYVVSHYTRQLLDALDYCHTRKIVHRDVRPHNLVLASKDTSAPLKLCGFGVAKDLSEIGGSMACGRVGVPQFMAPEIVRKDRVSCSSDIWSSGVVLFLLLAGRLPFSGSTSDIYERIMQTDVDVDGYMPNISESARNLVRRMLNADPSKRISAKEALNHEWIRDKEHMASRKHMNDVIDQMRRYNESRKLKSNVLSAVNSGRFDETTPRQDTPQTAFVDGSSPGGDCCHRGESSSNDAAEPPADKDLSGAYKVLGSLDAINSLLDPNSYKPGSTTFQKIHDDGSVRNLLRLYDKIKALPCEPVVTEVDTSTLRKETLNQIDGLLGPSPEALELRQLLNSPHLASCVQALDVVVCEIRDPKNEASGSGDKEGNCVSSDPAPAYLNGGVLPLGAQRAGTSFEHFNQSAVHTSYDEEEEELYDCMSRLRLVQFQKDTQEPMGITLKVNEDGRCFVARIMHGGMIHRQATLHVGDEIREINGMSVANRSVESLQEMLRDARGQVTFKIIPSYRSAPPACEIFVRAQFDYEPSQDDLIPCPQAGIPFKTGDILQVISKDDHNWWQARFVSSFPSIGNSSNAQRSNQQQVAGLIPSPELQEWRTACLAMERSKNTCNTHCMWFNKKKKYYTTKYLQKHSALFDQLDLVTYEEVMRLSQYRRKTLVLLGAHGVGRRHIKNTLIHRHPNRFAYPIPHTTRPPRKDEVDGKHYYFVTNEQMMADIQNNEYLEYGTHEESMYGTKLETIRNIHKSGKIAILDVEPQALKVLRTAEYSPFVVFIAAPNLQGMQDPDGSLEKLLNESDVLRQAFGHLFDFIITNSDIDDTIAQLERLVEKLPAYPQWLPVTWVY</sequence>
<keyword id="KW-0025">Alternative splicing</keyword>
<keyword id="KW-0112">Calmodulin-binding</keyword>
<keyword id="KW-1185">Reference proteome</keyword>
<keyword id="KW-0677">Repeat</keyword>
<keyword id="KW-0728">SH3 domain</keyword>
<comment type="function">
    <text>May play a structural role in the induction of the vulva. May be required for the localization of signal transduction molecules (such as let-23 receptor) to either the basal membrane domain or the cell junctions.</text>
</comment>
<comment type="interaction">
    <interactant intactId="EBI-315019">
        <id>P54936</id>
    </interactant>
    <interactant intactId="EBI-319798">
        <id>Q18624</id>
        <label>gmeb-3</label>
    </interactant>
    <organismsDiffer>false</organismsDiffer>
    <experiments>3</experiments>
</comment>
<comment type="interaction">
    <interactant intactId="EBI-315019">
        <id>P54936</id>
    </interactant>
    <interactant intactId="EBI-313389">
        <id>O17583</id>
        <label>lin-10</label>
    </interactant>
    <organismsDiffer>false</organismsDiffer>
    <experiments>5</experiments>
</comment>
<comment type="interaction">
    <interactant intactId="EBI-315019">
        <id>P54936</id>
    </interactant>
    <interactant intactId="EBI-319872">
        <id>Q9U245</id>
        <label>lin-7</label>
    </interactant>
    <organismsDiffer>false</organismsDiffer>
    <experiments>4</experiments>
</comment>
<comment type="alternative products">
    <event type="alternative splicing"/>
    <isoform>
        <id>P54936-1</id>
        <name>Lin-2a</name>
        <sequence type="displayed"/>
    </isoform>
    <isoform>
        <id>P54936-2</id>
        <name>Lin-2b</name>
        <sequence type="described" ref="VSP_003154 VSP_003155"/>
    </isoform>
</comment>
<comment type="similarity">
    <text evidence="8">Belongs to the MAGUK family.</text>
</comment>
<proteinExistence type="evidence at protein level"/>
<protein>
    <recommendedName>
        <fullName>Protein lin-2</fullName>
    </recommendedName>
    <alternativeName>
        <fullName>Abnormal cell lineage protein 2</fullName>
    </alternativeName>
</protein>
<feature type="chain" id="PRO_0000094572" description="Protein lin-2">
    <location>
        <begin position="1"/>
        <end position="961"/>
    </location>
</feature>
<feature type="domain" description="Protein kinase" evidence="3">
    <location>
        <begin position="17"/>
        <end position="281"/>
    </location>
</feature>
<feature type="domain" description="L27 1" evidence="5">
    <location>
        <begin position="365"/>
        <end position="422"/>
    </location>
</feature>
<feature type="domain" description="L27 2" evidence="5">
    <location>
        <begin position="428"/>
        <end position="479"/>
    </location>
</feature>
<feature type="domain" description="PDZ" evidence="2">
    <location>
        <begin position="545"/>
        <end position="620"/>
    </location>
</feature>
<feature type="domain" description="SH3" evidence="4">
    <location>
        <begin position="633"/>
        <end position="717"/>
    </location>
</feature>
<feature type="domain" description="Guanylate kinase-like" evidence="1">
    <location>
        <begin position="774"/>
        <end position="946"/>
    </location>
</feature>
<feature type="region of interest" description="Calmodulin-binding">
    <location>
        <begin position="310"/>
        <end position="320"/>
    </location>
</feature>
<feature type="region of interest" description="Disordered" evidence="6">
    <location>
        <begin position="318"/>
        <end position="366"/>
    </location>
</feature>
<feature type="splice variant" id="VSP_003154" description="In isoform Lin-2b." evidence="7">
    <location>
        <begin position="1"/>
        <end position="341"/>
    </location>
</feature>
<feature type="splice variant" id="VSP_003155" description="In isoform Lin-2b." evidence="7">
    <original>PGGDCCHRGESSSNDAAEPPADKDLSGAYKVLGSLDAINSLLDPNSYKPGSTTFQKIHDDGSVRNLLR</original>
    <variation>MSSAATPPPMEHTSSEDSTTAPLQTPSSSSCLDVTVAVGTSVSYLKASPLVSSPTSLVVDITESSSTL</variation>
    <location>
        <begin position="342"/>
        <end position="409"/>
    </location>
</feature>
<dbReference type="EMBL" id="X92564">
    <property type="protein sequence ID" value="CAA63314.1"/>
    <property type="molecule type" value="mRNA"/>
</dbReference>
<dbReference type="EMBL" id="X92565">
    <property type="protein sequence ID" value="CAA63315.1"/>
    <property type="molecule type" value="mRNA"/>
</dbReference>
<dbReference type="EMBL" id="Z50873">
    <property type="protein sequence ID" value="CAA90759.2"/>
    <property type="molecule type" value="Genomic_DNA"/>
</dbReference>
<dbReference type="EMBL" id="Z50873">
    <property type="protein sequence ID" value="CAA90760.2"/>
    <property type="molecule type" value="Genomic_DNA"/>
</dbReference>
<dbReference type="PIR" id="T21072">
    <property type="entry name" value="T21072"/>
</dbReference>
<dbReference type="PIR" id="T21073">
    <property type="entry name" value="T21073"/>
</dbReference>
<dbReference type="RefSeq" id="NP_001024587.1">
    <molecule id="P54936-1"/>
    <property type="nucleotide sequence ID" value="NM_001029416.4"/>
</dbReference>
<dbReference type="RefSeq" id="NP_001024588.1">
    <molecule id="P54936-2"/>
    <property type="nucleotide sequence ID" value="NM_001029417.4"/>
</dbReference>
<dbReference type="SMR" id="P54936"/>
<dbReference type="BioGRID" id="46305">
    <property type="interactions" value="67"/>
</dbReference>
<dbReference type="ComplexPortal" id="CPX-2604">
    <property type="entry name" value="LIN-10-LIN-2-LIN-7 complex"/>
</dbReference>
<dbReference type="FunCoup" id="P54936">
    <property type="interactions" value="1738"/>
</dbReference>
<dbReference type="IntAct" id="P54936">
    <property type="interactions" value="58"/>
</dbReference>
<dbReference type="MINT" id="P54936"/>
<dbReference type="STRING" id="6239.F17E5.1a.1"/>
<dbReference type="PaxDb" id="6239-F17E5.1a"/>
<dbReference type="PeptideAtlas" id="P54936"/>
<dbReference type="EnsemblMetazoa" id="F17E5.1a.1">
    <molecule id="P54936-1"/>
    <property type="protein sequence ID" value="F17E5.1a.1"/>
    <property type="gene ID" value="WBGene00002991"/>
</dbReference>
<dbReference type="EnsemblMetazoa" id="F17E5.1b.1">
    <molecule id="P54936-2"/>
    <property type="protein sequence ID" value="F17E5.1b.1"/>
    <property type="gene ID" value="WBGene00002991"/>
</dbReference>
<dbReference type="GeneID" id="181400"/>
<dbReference type="KEGG" id="cel:CELE_F17E5.1"/>
<dbReference type="UCSC" id="F17E5.1b">
    <molecule id="P54936-1"/>
    <property type="organism name" value="c. elegans"/>
</dbReference>
<dbReference type="AGR" id="WB:WBGene00002991"/>
<dbReference type="CTD" id="181400"/>
<dbReference type="WormBase" id="F17E5.1a">
    <molecule id="P54936-1"/>
    <property type="protein sequence ID" value="CE27131"/>
    <property type="gene ID" value="WBGene00002991"/>
    <property type="gene designation" value="lin-2"/>
</dbReference>
<dbReference type="WormBase" id="F17E5.1b">
    <molecule id="P54936-2"/>
    <property type="protein sequence ID" value="CE27132"/>
    <property type="gene ID" value="WBGene00002991"/>
    <property type="gene designation" value="lin-2"/>
</dbReference>
<dbReference type="eggNOG" id="KOG0033">
    <property type="taxonomic scope" value="Eukaryota"/>
</dbReference>
<dbReference type="eggNOG" id="KOG0609">
    <property type="taxonomic scope" value="Eukaryota"/>
</dbReference>
<dbReference type="GeneTree" id="ENSGT00940000169045"/>
<dbReference type="HOGENOM" id="CLU_001715_5_3_1"/>
<dbReference type="InParanoid" id="P54936"/>
<dbReference type="OMA" id="FFITHEQ"/>
<dbReference type="OrthoDB" id="336747at2759"/>
<dbReference type="PhylomeDB" id="P54936"/>
<dbReference type="Reactome" id="R-CEL-212676">
    <property type="pathway name" value="Dopamine Neurotransmitter Release Cycle"/>
</dbReference>
<dbReference type="Reactome" id="R-CEL-6794361">
    <property type="pathway name" value="Neurexins and neuroligins"/>
</dbReference>
<dbReference type="SignaLink" id="P54936"/>
<dbReference type="PRO" id="PR:P54936"/>
<dbReference type="Proteomes" id="UP000001940">
    <property type="component" value="Chromosome X"/>
</dbReference>
<dbReference type="Bgee" id="WBGene00002991">
    <property type="expression patterns" value="Expressed in larva and 3 other cell types or tissues"/>
</dbReference>
<dbReference type="GO" id="GO:0030054">
    <property type="term" value="C:cell junction"/>
    <property type="evidence" value="ECO:0000314"/>
    <property type="project" value="WormBase"/>
</dbReference>
<dbReference type="GO" id="GO:0005911">
    <property type="term" value="C:cell-cell junction"/>
    <property type="evidence" value="ECO:0000318"/>
    <property type="project" value="GO_Central"/>
</dbReference>
<dbReference type="GO" id="GO:0005886">
    <property type="term" value="C:plasma membrane"/>
    <property type="evidence" value="ECO:0000318"/>
    <property type="project" value="GO_Central"/>
</dbReference>
<dbReference type="GO" id="GO:0005524">
    <property type="term" value="F:ATP binding"/>
    <property type="evidence" value="ECO:0007669"/>
    <property type="project" value="InterPro"/>
</dbReference>
<dbReference type="GO" id="GO:0005516">
    <property type="term" value="F:calmodulin binding"/>
    <property type="evidence" value="ECO:0007669"/>
    <property type="project" value="UniProtKB-KW"/>
</dbReference>
<dbReference type="GO" id="GO:0005159">
    <property type="term" value="F:insulin-like growth factor receptor binding"/>
    <property type="evidence" value="ECO:0000353"/>
    <property type="project" value="WormBase"/>
</dbReference>
<dbReference type="GO" id="GO:0004713">
    <property type="term" value="F:protein tyrosine kinase activity"/>
    <property type="evidence" value="ECO:0007669"/>
    <property type="project" value="InterPro"/>
</dbReference>
<dbReference type="GO" id="GO:0005102">
    <property type="term" value="F:signaling receptor binding"/>
    <property type="evidence" value="ECO:0000318"/>
    <property type="project" value="GO_Central"/>
</dbReference>
<dbReference type="GO" id="GO:0018991">
    <property type="term" value="P:egg-laying behavior"/>
    <property type="evidence" value="ECO:0000315"/>
    <property type="project" value="WormBase"/>
</dbReference>
<dbReference type="GO" id="GO:0097112">
    <property type="term" value="P:gamma-aminobutyric acid receptor clustering"/>
    <property type="evidence" value="ECO:0000315"/>
    <property type="project" value="WormBase"/>
</dbReference>
<dbReference type="GO" id="GO:0040026">
    <property type="term" value="P:positive regulation of vulval development"/>
    <property type="evidence" value="ECO:0000315"/>
    <property type="project" value="WormBase"/>
</dbReference>
<dbReference type="GO" id="GO:0009791">
    <property type="term" value="P:post-embryonic development"/>
    <property type="evidence" value="ECO:0000315"/>
    <property type="project" value="WormBase"/>
</dbReference>
<dbReference type="GO" id="GO:0008104">
    <property type="term" value="P:protein localization"/>
    <property type="evidence" value="ECO:0000318"/>
    <property type="project" value="GO_Central"/>
</dbReference>
<dbReference type="GO" id="GO:1903361">
    <property type="term" value="P:protein localization to basolateral plasma membrane"/>
    <property type="evidence" value="ECO:0000315"/>
    <property type="project" value="WormBase"/>
</dbReference>
<dbReference type="GO" id="GO:0046928">
    <property type="term" value="P:regulation of neurotransmitter secretion"/>
    <property type="evidence" value="ECO:0000318"/>
    <property type="project" value="GO_Central"/>
</dbReference>
<dbReference type="CDD" id="cd00071">
    <property type="entry name" value="GMPK"/>
    <property type="match status" value="1"/>
</dbReference>
<dbReference type="CDD" id="cd10831">
    <property type="entry name" value="PDZ_CASK-like"/>
    <property type="match status" value="1"/>
</dbReference>
<dbReference type="CDD" id="cd12035">
    <property type="entry name" value="SH3_MPP1-like"/>
    <property type="match status" value="1"/>
</dbReference>
<dbReference type="DisProt" id="DP01436"/>
<dbReference type="FunFam" id="3.30.63.10:FF:000002">
    <property type="entry name" value="Guanylate kinase 1"/>
    <property type="match status" value="1"/>
</dbReference>
<dbReference type="FunFam" id="3.40.50.300:FF:000146">
    <property type="entry name" value="MAGUK p55 subfamily member 6 isoform X1"/>
    <property type="match status" value="1"/>
</dbReference>
<dbReference type="FunFam" id="2.30.42.10:FF:000016">
    <property type="entry name" value="peripheral plasma membrane protein CASK isoform X2"/>
    <property type="match status" value="1"/>
</dbReference>
<dbReference type="Gene3D" id="2.30.42.10">
    <property type="match status" value="1"/>
</dbReference>
<dbReference type="Gene3D" id="1.10.287.650">
    <property type="entry name" value="L27 domain"/>
    <property type="match status" value="1"/>
</dbReference>
<dbReference type="Gene3D" id="3.40.50.300">
    <property type="entry name" value="P-loop containing nucleotide triphosphate hydrolases"/>
    <property type="match status" value="1"/>
</dbReference>
<dbReference type="Gene3D" id="3.30.200.20">
    <property type="entry name" value="Phosphorylase Kinase, domain 1"/>
    <property type="match status" value="1"/>
</dbReference>
<dbReference type="Gene3D" id="2.30.30.40">
    <property type="entry name" value="SH3 Domains"/>
    <property type="match status" value="1"/>
</dbReference>
<dbReference type="Gene3D" id="1.10.510.10">
    <property type="entry name" value="Transferase(Phosphotransferase) domain 1"/>
    <property type="match status" value="1"/>
</dbReference>
<dbReference type="InterPro" id="IPR008145">
    <property type="entry name" value="GK/Ca_channel_bsu"/>
</dbReference>
<dbReference type="InterPro" id="IPR008144">
    <property type="entry name" value="Guanylate_kin-like_dom"/>
</dbReference>
<dbReference type="InterPro" id="IPR020590">
    <property type="entry name" value="Guanylate_kinase_CS"/>
</dbReference>
<dbReference type="InterPro" id="IPR011009">
    <property type="entry name" value="Kinase-like_dom_sf"/>
</dbReference>
<dbReference type="InterPro" id="IPR014775">
    <property type="entry name" value="L27_C"/>
</dbReference>
<dbReference type="InterPro" id="IPR004172">
    <property type="entry name" value="L27_dom"/>
</dbReference>
<dbReference type="InterPro" id="IPR050716">
    <property type="entry name" value="MAGUK"/>
</dbReference>
<dbReference type="InterPro" id="IPR027417">
    <property type="entry name" value="P-loop_NTPase"/>
</dbReference>
<dbReference type="InterPro" id="IPR001478">
    <property type="entry name" value="PDZ"/>
</dbReference>
<dbReference type="InterPro" id="IPR036034">
    <property type="entry name" value="PDZ_sf"/>
</dbReference>
<dbReference type="InterPro" id="IPR000719">
    <property type="entry name" value="Prot_kinase_dom"/>
</dbReference>
<dbReference type="InterPro" id="IPR036028">
    <property type="entry name" value="SH3-like_dom_sf"/>
</dbReference>
<dbReference type="InterPro" id="IPR001452">
    <property type="entry name" value="SH3_domain"/>
</dbReference>
<dbReference type="InterPro" id="IPR008266">
    <property type="entry name" value="Tyr_kinase_AS"/>
</dbReference>
<dbReference type="InterPro" id="IPR020635">
    <property type="entry name" value="Tyr_kinase_cat_dom"/>
</dbReference>
<dbReference type="PANTHER" id="PTHR23122">
    <property type="entry name" value="MEMBRANE-ASSOCIATED GUANYLATE KINASE MAGUK"/>
    <property type="match status" value="1"/>
</dbReference>
<dbReference type="Pfam" id="PF00625">
    <property type="entry name" value="Guanylate_kin"/>
    <property type="match status" value="1"/>
</dbReference>
<dbReference type="Pfam" id="PF02828">
    <property type="entry name" value="L27"/>
    <property type="match status" value="2"/>
</dbReference>
<dbReference type="Pfam" id="PF00595">
    <property type="entry name" value="PDZ"/>
    <property type="match status" value="1"/>
</dbReference>
<dbReference type="Pfam" id="PF00069">
    <property type="entry name" value="Pkinase"/>
    <property type="match status" value="1"/>
</dbReference>
<dbReference type="Pfam" id="PF00018">
    <property type="entry name" value="SH3_1"/>
    <property type="match status" value="1"/>
</dbReference>
<dbReference type="SMART" id="SM00072">
    <property type="entry name" value="GuKc"/>
    <property type="match status" value="1"/>
</dbReference>
<dbReference type="SMART" id="SM00569">
    <property type="entry name" value="L27"/>
    <property type="match status" value="2"/>
</dbReference>
<dbReference type="SMART" id="SM00228">
    <property type="entry name" value="PDZ"/>
    <property type="match status" value="1"/>
</dbReference>
<dbReference type="SMART" id="SM00326">
    <property type="entry name" value="SH3"/>
    <property type="match status" value="1"/>
</dbReference>
<dbReference type="SMART" id="SM00219">
    <property type="entry name" value="TyrKc"/>
    <property type="match status" value="1"/>
</dbReference>
<dbReference type="SUPFAM" id="SSF52540">
    <property type="entry name" value="P-loop containing nucleoside triphosphate hydrolases"/>
    <property type="match status" value="1"/>
</dbReference>
<dbReference type="SUPFAM" id="SSF50156">
    <property type="entry name" value="PDZ domain-like"/>
    <property type="match status" value="1"/>
</dbReference>
<dbReference type="SUPFAM" id="SSF56112">
    <property type="entry name" value="Protein kinase-like (PK-like)"/>
    <property type="match status" value="1"/>
</dbReference>
<dbReference type="SUPFAM" id="SSF50044">
    <property type="entry name" value="SH3-domain"/>
    <property type="match status" value="1"/>
</dbReference>
<dbReference type="PROSITE" id="PS00856">
    <property type="entry name" value="GUANYLATE_KINASE_1"/>
    <property type="match status" value="1"/>
</dbReference>
<dbReference type="PROSITE" id="PS50052">
    <property type="entry name" value="GUANYLATE_KINASE_2"/>
    <property type="match status" value="1"/>
</dbReference>
<dbReference type="PROSITE" id="PS51022">
    <property type="entry name" value="L27"/>
    <property type="match status" value="2"/>
</dbReference>
<dbReference type="PROSITE" id="PS50106">
    <property type="entry name" value="PDZ"/>
    <property type="match status" value="1"/>
</dbReference>
<dbReference type="PROSITE" id="PS50011">
    <property type="entry name" value="PROTEIN_KINASE_DOM"/>
    <property type="match status" value="1"/>
</dbReference>
<dbReference type="PROSITE" id="PS00109">
    <property type="entry name" value="PROTEIN_KINASE_TYR"/>
    <property type="match status" value="1"/>
</dbReference>
<dbReference type="PROSITE" id="PS50002">
    <property type="entry name" value="SH3"/>
    <property type="match status" value="1"/>
</dbReference>
<accession>P54936</accession>